<dbReference type="EMBL" id="AE014297">
    <property type="protein sequence ID" value="AAF56007.1"/>
    <property type="molecule type" value="Genomic_DNA"/>
</dbReference>
<dbReference type="EMBL" id="AY051649">
    <property type="protein sequence ID" value="AAK93073.1"/>
    <property type="molecule type" value="mRNA"/>
</dbReference>
<dbReference type="RefSeq" id="NP_001163688.1">
    <property type="nucleotide sequence ID" value="NM_001170217.2"/>
</dbReference>
<dbReference type="RefSeq" id="NP_651053.1">
    <property type="nucleotide sequence ID" value="NM_142796.4"/>
</dbReference>
<dbReference type="SMR" id="Q9VCZ8"/>
<dbReference type="BioGRID" id="67602">
    <property type="interactions" value="21"/>
</dbReference>
<dbReference type="ComplexPortal" id="CPX-2389">
    <property type="entry name" value="Prefoldin co-chaperone complex"/>
</dbReference>
<dbReference type="DIP" id="DIP-20776N"/>
<dbReference type="FunCoup" id="Q9VCZ8">
    <property type="interactions" value="2097"/>
</dbReference>
<dbReference type="IntAct" id="Q9VCZ8">
    <property type="interactions" value="18"/>
</dbReference>
<dbReference type="STRING" id="7227.FBpp0290701"/>
<dbReference type="GlyGen" id="Q9VCZ8">
    <property type="glycosylation" value="1 site"/>
</dbReference>
<dbReference type="PaxDb" id="7227-FBpp0290701"/>
<dbReference type="DNASU" id="42647"/>
<dbReference type="EnsemblMetazoa" id="FBtr0084257">
    <property type="protein sequence ID" value="FBpp0083650"/>
    <property type="gene ID" value="FBgn0038976"/>
</dbReference>
<dbReference type="EnsemblMetazoa" id="FBtr0301486">
    <property type="protein sequence ID" value="FBpp0290701"/>
    <property type="gene ID" value="FBgn0038976"/>
</dbReference>
<dbReference type="GeneID" id="42647"/>
<dbReference type="KEGG" id="dme:Dmel_CG7048"/>
<dbReference type="UCSC" id="CG7048-RA">
    <property type="organism name" value="d. melanogaster"/>
</dbReference>
<dbReference type="AGR" id="FB:FBgn0038976"/>
<dbReference type="CTD" id="5204"/>
<dbReference type="FlyBase" id="FBgn0038976">
    <property type="gene designation" value="Pfdn5"/>
</dbReference>
<dbReference type="VEuPathDB" id="VectorBase:FBgn0038976"/>
<dbReference type="eggNOG" id="KOG3048">
    <property type="taxonomic scope" value="Eukaryota"/>
</dbReference>
<dbReference type="GeneTree" id="ENSGT00390000008783"/>
<dbReference type="HOGENOM" id="CLU_091867_0_1_1"/>
<dbReference type="InParanoid" id="Q9VCZ8"/>
<dbReference type="OMA" id="QAKFKAC"/>
<dbReference type="OrthoDB" id="10267474at2759"/>
<dbReference type="PhylomeDB" id="Q9VCZ8"/>
<dbReference type="SignaLink" id="Q9VCZ8"/>
<dbReference type="BioGRID-ORCS" id="42647">
    <property type="hits" value="0 hits in 1 CRISPR screen"/>
</dbReference>
<dbReference type="ChiTaRS" id="CG7048">
    <property type="organism name" value="fly"/>
</dbReference>
<dbReference type="GenomeRNAi" id="42647"/>
<dbReference type="PRO" id="PR:Q9VCZ8"/>
<dbReference type="Proteomes" id="UP000000803">
    <property type="component" value="Chromosome 3R"/>
</dbReference>
<dbReference type="Bgee" id="FBgn0038976">
    <property type="expression patterns" value="Expressed in adult anterior midgut class II enteroendocrine cell in adult midgut (Drosophila) and 159 other cell types or tissues"/>
</dbReference>
<dbReference type="ExpressionAtlas" id="Q9VCZ8">
    <property type="expression patterns" value="baseline and differential"/>
</dbReference>
<dbReference type="GO" id="GO:0005737">
    <property type="term" value="C:cytoplasm"/>
    <property type="evidence" value="ECO:0000318"/>
    <property type="project" value="GO_Central"/>
</dbReference>
<dbReference type="GO" id="GO:0016272">
    <property type="term" value="C:prefoldin complex"/>
    <property type="evidence" value="ECO:0000314"/>
    <property type="project" value="FlyBase"/>
</dbReference>
<dbReference type="GO" id="GO:0051082">
    <property type="term" value="F:unfolded protein binding"/>
    <property type="evidence" value="ECO:0007669"/>
    <property type="project" value="InterPro"/>
</dbReference>
<dbReference type="GO" id="GO:0006457">
    <property type="term" value="P:protein folding"/>
    <property type="evidence" value="ECO:0000250"/>
    <property type="project" value="FlyBase"/>
</dbReference>
<dbReference type="GO" id="GO:1990113">
    <property type="term" value="P:RNA polymerase I assembly"/>
    <property type="evidence" value="ECO:0000318"/>
    <property type="project" value="GO_Central"/>
</dbReference>
<dbReference type="GO" id="GO:1990114">
    <property type="term" value="P:RNA polymerase II core complex assembly"/>
    <property type="evidence" value="ECO:0000318"/>
    <property type="project" value="GO_Central"/>
</dbReference>
<dbReference type="GO" id="GO:1990115">
    <property type="term" value="P:RNA polymerase III assembly"/>
    <property type="evidence" value="ECO:0000318"/>
    <property type="project" value="GO_Central"/>
</dbReference>
<dbReference type="CDD" id="cd23157">
    <property type="entry name" value="Prefoldin_5"/>
    <property type="match status" value="1"/>
</dbReference>
<dbReference type="FunFam" id="1.10.287.370:FF:000004">
    <property type="entry name" value="Probable prefoldin subunit 5"/>
    <property type="match status" value="1"/>
</dbReference>
<dbReference type="Gene3D" id="1.10.287.370">
    <property type="match status" value="1"/>
</dbReference>
<dbReference type="InterPro" id="IPR011599">
    <property type="entry name" value="PFD_alpha_archaea"/>
</dbReference>
<dbReference type="InterPro" id="IPR009053">
    <property type="entry name" value="Prefoldin"/>
</dbReference>
<dbReference type="InterPro" id="IPR004127">
    <property type="entry name" value="Prefoldin_subunit_alpha"/>
</dbReference>
<dbReference type="NCBIfam" id="TIGR00293">
    <property type="entry name" value="prefoldin subunit alpha"/>
    <property type="match status" value="1"/>
</dbReference>
<dbReference type="PANTHER" id="PTHR12674">
    <property type="entry name" value="PREFOLDIN SUBUNIT 5"/>
    <property type="match status" value="1"/>
</dbReference>
<dbReference type="PANTHER" id="PTHR12674:SF2">
    <property type="entry name" value="PREFOLDIN SUBUNIT 5"/>
    <property type="match status" value="1"/>
</dbReference>
<dbReference type="Pfam" id="PF02996">
    <property type="entry name" value="Prefoldin"/>
    <property type="match status" value="1"/>
</dbReference>
<dbReference type="SUPFAM" id="SSF46579">
    <property type="entry name" value="Prefoldin"/>
    <property type="match status" value="1"/>
</dbReference>
<evidence type="ECO:0000250" key="1"/>
<evidence type="ECO:0000305" key="2"/>
<evidence type="ECO:0000312" key="3">
    <source>
        <dbReference type="FlyBase" id="FBgn0038976"/>
    </source>
</evidence>
<accession>Q9VCZ8</accession>
<name>PFD5_DROME</name>
<comment type="function">
    <text evidence="1">Binds specifically to cytosolic chaperonin (c-CPN) and transfers target proteins to it. Binds to nascent polypeptide chain and promotes folding in an environment in which there are many competing pathways for nonnative proteins (By similarity).</text>
</comment>
<comment type="subunit">
    <text evidence="1">Heterohexamer of two PFD-alpha type and four PFD-beta type subunits.</text>
</comment>
<comment type="interaction">
    <interactant intactId="EBI-100243">
        <id>Q9VCZ8</id>
    </interactant>
    <interactant intactId="EBI-130766">
        <id>Q8T965</id>
        <label>Dmel\CG15676</label>
    </interactant>
    <organismsDiffer>false</organismsDiffer>
    <experiments>4</experiments>
</comment>
<comment type="interaction">
    <interactant intactId="EBI-100243">
        <id>Q9VCZ8</id>
    </interactant>
    <interactant intactId="EBI-186707">
        <id>Q9VGP6</id>
        <label>mgr</label>
    </interactant>
    <organismsDiffer>false</organismsDiffer>
    <experiments>5</experiments>
</comment>
<comment type="similarity">
    <text evidence="2">Belongs to the prefoldin subunit alpha family.</text>
</comment>
<protein>
    <recommendedName>
        <fullName>Probable prefoldin subunit 5</fullName>
    </recommendedName>
</protein>
<organism>
    <name type="scientific">Drosophila melanogaster</name>
    <name type="common">Fruit fly</name>
    <dbReference type="NCBI Taxonomy" id="7227"/>
    <lineage>
        <taxon>Eukaryota</taxon>
        <taxon>Metazoa</taxon>
        <taxon>Ecdysozoa</taxon>
        <taxon>Arthropoda</taxon>
        <taxon>Hexapoda</taxon>
        <taxon>Insecta</taxon>
        <taxon>Pterygota</taxon>
        <taxon>Neoptera</taxon>
        <taxon>Endopterygota</taxon>
        <taxon>Diptera</taxon>
        <taxon>Brachycera</taxon>
        <taxon>Muscomorpha</taxon>
        <taxon>Ephydroidea</taxon>
        <taxon>Drosophilidae</taxon>
        <taxon>Drosophila</taxon>
        <taxon>Sophophora</taxon>
    </lineage>
</organism>
<sequence length="168" mass="19078">MAATPSAPAKSEMIDLTKLSPEQLIQIKQEFEQEITNVQDSLSTLHGCQAKYAGSKEALGTFQPNWENRQILVPLTSSMYVPGRVKDLNRFVIDIGTGYYIEKDLEGSKDYFKRRVEYVQEQIEKIEKIHLQKTRFYNSVMSVLEMKQAAAAKLQSQQQSQPAVTQSS</sequence>
<proteinExistence type="evidence at protein level"/>
<reference key="1">
    <citation type="journal article" date="2000" name="Science">
        <title>The genome sequence of Drosophila melanogaster.</title>
        <authorList>
            <person name="Adams M.D."/>
            <person name="Celniker S.E."/>
            <person name="Holt R.A."/>
            <person name="Evans C.A."/>
            <person name="Gocayne J.D."/>
            <person name="Amanatides P.G."/>
            <person name="Scherer S.E."/>
            <person name="Li P.W."/>
            <person name="Hoskins R.A."/>
            <person name="Galle R.F."/>
            <person name="George R.A."/>
            <person name="Lewis S.E."/>
            <person name="Richards S."/>
            <person name="Ashburner M."/>
            <person name="Henderson S.N."/>
            <person name="Sutton G.G."/>
            <person name="Wortman J.R."/>
            <person name="Yandell M.D."/>
            <person name="Zhang Q."/>
            <person name="Chen L.X."/>
            <person name="Brandon R.C."/>
            <person name="Rogers Y.-H.C."/>
            <person name="Blazej R.G."/>
            <person name="Champe M."/>
            <person name="Pfeiffer B.D."/>
            <person name="Wan K.H."/>
            <person name="Doyle C."/>
            <person name="Baxter E.G."/>
            <person name="Helt G."/>
            <person name="Nelson C.R."/>
            <person name="Miklos G.L.G."/>
            <person name="Abril J.F."/>
            <person name="Agbayani A."/>
            <person name="An H.-J."/>
            <person name="Andrews-Pfannkoch C."/>
            <person name="Baldwin D."/>
            <person name="Ballew R.M."/>
            <person name="Basu A."/>
            <person name="Baxendale J."/>
            <person name="Bayraktaroglu L."/>
            <person name="Beasley E.M."/>
            <person name="Beeson K.Y."/>
            <person name="Benos P.V."/>
            <person name="Berman B.P."/>
            <person name="Bhandari D."/>
            <person name="Bolshakov S."/>
            <person name="Borkova D."/>
            <person name="Botchan M.R."/>
            <person name="Bouck J."/>
            <person name="Brokstein P."/>
            <person name="Brottier P."/>
            <person name="Burtis K.C."/>
            <person name="Busam D.A."/>
            <person name="Butler H."/>
            <person name="Cadieu E."/>
            <person name="Center A."/>
            <person name="Chandra I."/>
            <person name="Cherry J.M."/>
            <person name="Cawley S."/>
            <person name="Dahlke C."/>
            <person name="Davenport L.B."/>
            <person name="Davies P."/>
            <person name="de Pablos B."/>
            <person name="Delcher A."/>
            <person name="Deng Z."/>
            <person name="Mays A.D."/>
            <person name="Dew I."/>
            <person name="Dietz S.M."/>
            <person name="Dodson K."/>
            <person name="Doup L.E."/>
            <person name="Downes M."/>
            <person name="Dugan-Rocha S."/>
            <person name="Dunkov B.C."/>
            <person name="Dunn P."/>
            <person name="Durbin K.J."/>
            <person name="Evangelista C.C."/>
            <person name="Ferraz C."/>
            <person name="Ferriera S."/>
            <person name="Fleischmann W."/>
            <person name="Fosler C."/>
            <person name="Gabrielian A.E."/>
            <person name="Garg N.S."/>
            <person name="Gelbart W.M."/>
            <person name="Glasser K."/>
            <person name="Glodek A."/>
            <person name="Gong F."/>
            <person name="Gorrell J.H."/>
            <person name="Gu Z."/>
            <person name="Guan P."/>
            <person name="Harris M."/>
            <person name="Harris N.L."/>
            <person name="Harvey D.A."/>
            <person name="Heiman T.J."/>
            <person name="Hernandez J.R."/>
            <person name="Houck J."/>
            <person name="Hostin D."/>
            <person name="Houston K.A."/>
            <person name="Howland T.J."/>
            <person name="Wei M.-H."/>
            <person name="Ibegwam C."/>
            <person name="Jalali M."/>
            <person name="Kalush F."/>
            <person name="Karpen G.H."/>
            <person name="Ke Z."/>
            <person name="Kennison J.A."/>
            <person name="Ketchum K.A."/>
            <person name="Kimmel B.E."/>
            <person name="Kodira C.D."/>
            <person name="Kraft C.L."/>
            <person name="Kravitz S."/>
            <person name="Kulp D."/>
            <person name="Lai Z."/>
            <person name="Lasko P."/>
            <person name="Lei Y."/>
            <person name="Levitsky A.A."/>
            <person name="Li J.H."/>
            <person name="Li Z."/>
            <person name="Liang Y."/>
            <person name="Lin X."/>
            <person name="Liu X."/>
            <person name="Mattei B."/>
            <person name="McIntosh T.C."/>
            <person name="McLeod M.P."/>
            <person name="McPherson D."/>
            <person name="Merkulov G."/>
            <person name="Milshina N.V."/>
            <person name="Mobarry C."/>
            <person name="Morris J."/>
            <person name="Moshrefi A."/>
            <person name="Mount S.M."/>
            <person name="Moy M."/>
            <person name="Murphy B."/>
            <person name="Murphy L."/>
            <person name="Muzny D.M."/>
            <person name="Nelson D.L."/>
            <person name="Nelson D.R."/>
            <person name="Nelson K.A."/>
            <person name="Nixon K."/>
            <person name="Nusskern D.R."/>
            <person name="Pacleb J.M."/>
            <person name="Palazzolo M."/>
            <person name="Pittman G.S."/>
            <person name="Pan S."/>
            <person name="Pollard J."/>
            <person name="Puri V."/>
            <person name="Reese M.G."/>
            <person name="Reinert K."/>
            <person name="Remington K."/>
            <person name="Saunders R.D.C."/>
            <person name="Scheeler F."/>
            <person name="Shen H."/>
            <person name="Shue B.C."/>
            <person name="Siden-Kiamos I."/>
            <person name="Simpson M."/>
            <person name="Skupski M.P."/>
            <person name="Smith T.J."/>
            <person name="Spier E."/>
            <person name="Spradling A.C."/>
            <person name="Stapleton M."/>
            <person name="Strong R."/>
            <person name="Sun E."/>
            <person name="Svirskas R."/>
            <person name="Tector C."/>
            <person name="Turner R."/>
            <person name="Venter E."/>
            <person name="Wang A.H."/>
            <person name="Wang X."/>
            <person name="Wang Z.-Y."/>
            <person name="Wassarman D.A."/>
            <person name="Weinstock G.M."/>
            <person name="Weissenbach J."/>
            <person name="Williams S.M."/>
            <person name="Woodage T."/>
            <person name="Worley K.C."/>
            <person name="Wu D."/>
            <person name="Yang S."/>
            <person name="Yao Q.A."/>
            <person name="Ye J."/>
            <person name="Yeh R.-F."/>
            <person name="Zaveri J.S."/>
            <person name="Zhan M."/>
            <person name="Zhang G."/>
            <person name="Zhao Q."/>
            <person name="Zheng L."/>
            <person name="Zheng X.H."/>
            <person name="Zhong F.N."/>
            <person name="Zhong W."/>
            <person name="Zhou X."/>
            <person name="Zhu S.C."/>
            <person name="Zhu X."/>
            <person name="Smith H.O."/>
            <person name="Gibbs R.A."/>
            <person name="Myers E.W."/>
            <person name="Rubin G.M."/>
            <person name="Venter J.C."/>
        </authorList>
    </citation>
    <scope>NUCLEOTIDE SEQUENCE [LARGE SCALE GENOMIC DNA]</scope>
    <source>
        <strain>Berkeley</strain>
    </source>
</reference>
<reference key="2">
    <citation type="journal article" date="2002" name="Genome Biol.">
        <title>Annotation of the Drosophila melanogaster euchromatic genome: a systematic review.</title>
        <authorList>
            <person name="Misra S."/>
            <person name="Crosby M.A."/>
            <person name="Mungall C.J."/>
            <person name="Matthews B.B."/>
            <person name="Campbell K.S."/>
            <person name="Hradecky P."/>
            <person name="Huang Y."/>
            <person name="Kaminker J.S."/>
            <person name="Millburn G.H."/>
            <person name="Prochnik S.E."/>
            <person name="Smith C.D."/>
            <person name="Tupy J.L."/>
            <person name="Whitfield E.J."/>
            <person name="Bayraktaroglu L."/>
            <person name="Berman B.P."/>
            <person name="Bettencourt B.R."/>
            <person name="Celniker S.E."/>
            <person name="de Grey A.D.N.J."/>
            <person name="Drysdale R.A."/>
            <person name="Harris N.L."/>
            <person name="Richter J."/>
            <person name="Russo S."/>
            <person name="Schroeder A.J."/>
            <person name="Shu S.Q."/>
            <person name="Stapleton M."/>
            <person name="Yamada C."/>
            <person name="Ashburner M."/>
            <person name="Gelbart W.M."/>
            <person name="Rubin G.M."/>
            <person name="Lewis S.E."/>
        </authorList>
    </citation>
    <scope>GENOME REANNOTATION</scope>
    <source>
        <strain>Berkeley</strain>
    </source>
</reference>
<reference key="3">
    <citation type="journal article" date="2002" name="Genome Biol.">
        <title>A Drosophila full-length cDNA resource.</title>
        <authorList>
            <person name="Stapleton M."/>
            <person name="Carlson J.W."/>
            <person name="Brokstein P."/>
            <person name="Yu C."/>
            <person name="Champe M."/>
            <person name="George R.A."/>
            <person name="Guarin H."/>
            <person name="Kronmiller B."/>
            <person name="Pacleb J.M."/>
            <person name="Park S."/>
            <person name="Wan K.H."/>
            <person name="Rubin G.M."/>
            <person name="Celniker S.E."/>
        </authorList>
    </citation>
    <scope>NUCLEOTIDE SEQUENCE [LARGE SCALE MRNA]</scope>
    <source>
        <strain>Berkeley</strain>
        <tissue>Head</tissue>
    </source>
</reference>
<keyword id="KW-0143">Chaperone</keyword>
<keyword id="KW-1185">Reference proteome</keyword>
<feature type="chain" id="PRO_0000153665" description="Probable prefoldin subunit 5">
    <location>
        <begin position="1"/>
        <end position="168"/>
    </location>
</feature>
<gene>
    <name evidence="3" type="primary">Pfdn5</name>
    <name evidence="3" type="ORF">CG7048</name>
</gene>